<organism>
    <name type="scientific">Campylobacter curvus (strain 525.92)</name>
    <dbReference type="NCBI Taxonomy" id="360105"/>
    <lineage>
        <taxon>Bacteria</taxon>
        <taxon>Pseudomonadati</taxon>
        <taxon>Campylobacterota</taxon>
        <taxon>Epsilonproteobacteria</taxon>
        <taxon>Campylobacterales</taxon>
        <taxon>Campylobacteraceae</taxon>
        <taxon>Campylobacter</taxon>
    </lineage>
</organism>
<gene>
    <name evidence="1" type="primary">hisG</name>
    <name type="ordered locus">Ccur92_04770</name>
    <name type="ORF">CCV52592_0991</name>
</gene>
<proteinExistence type="inferred from homology"/>
<sequence>MITIALPKGRIAEDTLAIFRKIFGSEFLFEDRKLILEEGNFRFLMVRNQDIPTYVTEGAADVGVVGLDVLEEHHPDVVRLLDLHIGKCRVCVGIKNDEELDYTQPELKIATKMPNIARNYFAQKATALKIIKLYGSIELAPLVGLSDAIVDVVETGSTMKQNGLKIAETIMQSSAHLIANKSSFIIKKDEILELYHKIKEQIPKTQ</sequence>
<feature type="chain" id="PRO_1000063278" description="ATP phosphoribosyltransferase">
    <location>
        <begin position="1"/>
        <end position="206"/>
    </location>
</feature>
<reference key="1">
    <citation type="submission" date="2007-07" db="EMBL/GenBank/DDBJ databases">
        <title>Genome sequence of Campylobacter curvus 525.92 isolated from human feces.</title>
        <authorList>
            <person name="Fouts D.E."/>
            <person name="Mongodin E.F."/>
            <person name="Puiu D."/>
            <person name="Sebastian Y."/>
            <person name="Miller W.G."/>
            <person name="Mandrell R.E."/>
            <person name="Lastovica A.J."/>
            <person name="Nelson K.E."/>
        </authorList>
    </citation>
    <scope>NUCLEOTIDE SEQUENCE [LARGE SCALE GENOMIC DNA]</scope>
    <source>
        <strain>525.92</strain>
    </source>
</reference>
<name>HIS1_CAMC5</name>
<keyword id="KW-0028">Amino-acid biosynthesis</keyword>
<keyword id="KW-0067">ATP-binding</keyword>
<keyword id="KW-0963">Cytoplasm</keyword>
<keyword id="KW-0328">Glycosyltransferase</keyword>
<keyword id="KW-0368">Histidine biosynthesis</keyword>
<keyword id="KW-0547">Nucleotide-binding</keyword>
<keyword id="KW-1185">Reference proteome</keyword>
<keyword id="KW-0808">Transferase</keyword>
<comment type="function">
    <text evidence="1">Catalyzes the condensation of ATP and 5-phosphoribose 1-diphosphate to form N'-(5'-phosphoribosyl)-ATP (PR-ATP). Has a crucial role in the pathway because the rate of histidine biosynthesis seems to be controlled primarily by regulation of HisG enzymatic activity.</text>
</comment>
<comment type="catalytic activity">
    <reaction evidence="1">
        <text>1-(5-phospho-beta-D-ribosyl)-ATP + diphosphate = 5-phospho-alpha-D-ribose 1-diphosphate + ATP</text>
        <dbReference type="Rhea" id="RHEA:18473"/>
        <dbReference type="ChEBI" id="CHEBI:30616"/>
        <dbReference type="ChEBI" id="CHEBI:33019"/>
        <dbReference type="ChEBI" id="CHEBI:58017"/>
        <dbReference type="ChEBI" id="CHEBI:73183"/>
        <dbReference type="EC" id="2.4.2.17"/>
    </reaction>
</comment>
<comment type="pathway">
    <text evidence="1">Amino-acid biosynthesis; L-histidine biosynthesis; L-histidine from 5-phospho-alpha-D-ribose 1-diphosphate: step 1/9.</text>
</comment>
<comment type="subunit">
    <text evidence="1">Heteromultimer composed of HisG and HisZ subunits.</text>
</comment>
<comment type="subcellular location">
    <subcellularLocation>
        <location evidence="1">Cytoplasm</location>
    </subcellularLocation>
</comment>
<comment type="domain">
    <text>Lacks the C-terminal regulatory region which is replaced by HisZ.</text>
</comment>
<comment type="similarity">
    <text evidence="1">Belongs to the ATP phosphoribosyltransferase family. Short subfamily.</text>
</comment>
<dbReference type="EC" id="2.4.2.17" evidence="1"/>
<dbReference type="EMBL" id="CP000767">
    <property type="protein sequence ID" value="EAT99850.1"/>
    <property type="molecule type" value="Genomic_DNA"/>
</dbReference>
<dbReference type="RefSeq" id="WP_011991971.1">
    <property type="nucleotide sequence ID" value="NC_009715.2"/>
</dbReference>
<dbReference type="SMR" id="A7GX39"/>
<dbReference type="STRING" id="360105.CCV52592_0991"/>
<dbReference type="GeneID" id="61001780"/>
<dbReference type="KEGG" id="ccv:CCV52592_0991"/>
<dbReference type="HOGENOM" id="CLU_038115_2_0_7"/>
<dbReference type="OrthoDB" id="9801867at2"/>
<dbReference type="UniPathway" id="UPA00031">
    <property type="reaction ID" value="UER00006"/>
</dbReference>
<dbReference type="Proteomes" id="UP000006380">
    <property type="component" value="Chromosome"/>
</dbReference>
<dbReference type="GO" id="GO:0005737">
    <property type="term" value="C:cytoplasm"/>
    <property type="evidence" value="ECO:0007669"/>
    <property type="project" value="UniProtKB-SubCell"/>
</dbReference>
<dbReference type="GO" id="GO:0005524">
    <property type="term" value="F:ATP binding"/>
    <property type="evidence" value="ECO:0007669"/>
    <property type="project" value="UniProtKB-KW"/>
</dbReference>
<dbReference type="GO" id="GO:0003879">
    <property type="term" value="F:ATP phosphoribosyltransferase activity"/>
    <property type="evidence" value="ECO:0007669"/>
    <property type="project" value="UniProtKB-UniRule"/>
</dbReference>
<dbReference type="GO" id="GO:0000105">
    <property type="term" value="P:L-histidine biosynthetic process"/>
    <property type="evidence" value="ECO:0007669"/>
    <property type="project" value="UniProtKB-UniRule"/>
</dbReference>
<dbReference type="CDD" id="cd13595">
    <property type="entry name" value="PBP2_HisGs"/>
    <property type="match status" value="1"/>
</dbReference>
<dbReference type="FunFam" id="3.40.190.10:FF:000008">
    <property type="entry name" value="ATP phosphoribosyltransferase"/>
    <property type="match status" value="1"/>
</dbReference>
<dbReference type="Gene3D" id="3.40.190.10">
    <property type="entry name" value="Periplasmic binding protein-like II"/>
    <property type="match status" value="2"/>
</dbReference>
<dbReference type="HAMAP" id="MF_01018">
    <property type="entry name" value="HisG_Short"/>
    <property type="match status" value="1"/>
</dbReference>
<dbReference type="InterPro" id="IPR013820">
    <property type="entry name" value="ATP_PRibTrfase_cat"/>
</dbReference>
<dbReference type="InterPro" id="IPR018198">
    <property type="entry name" value="ATP_PRibTrfase_CS"/>
</dbReference>
<dbReference type="InterPro" id="IPR001348">
    <property type="entry name" value="ATP_PRibTrfase_HisG"/>
</dbReference>
<dbReference type="InterPro" id="IPR024893">
    <property type="entry name" value="ATP_PRibTrfase_HisG_short"/>
</dbReference>
<dbReference type="NCBIfam" id="TIGR00070">
    <property type="entry name" value="hisG"/>
    <property type="match status" value="1"/>
</dbReference>
<dbReference type="PANTHER" id="PTHR21403:SF8">
    <property type="entry name" value="ATP PHOSPHORIBOSYLTRANSFERASE"/>
    <property type="match status" value="1"/>
</dbReference>
<dbReference type="PANTHER" id="PTHR21403">
    <property type="entry name" value="ATP PHOSPHORIBOSYLTRANSFERASE ATP-PRTASE"/>
    <property type="match status" value="1"/>
</dbReference>
<dbReference type="Pfam" id="PF01634">
    <property type="entry name" value="HisG"/>
    <property type="match status" value="1"/>
</dbReference>
<dbReference type="SUPFAM" id="SSF53850">
    <property type="entry name" value="Periplasmic binding protein-like II"/>
    <property type="match status" value="1"/>
</dbReference>
<dbReference type="PROSITE" id="PS01316">
    <property type="entry name" value="ATP_P_PHORIBOSYLTR"/>
    <property type="match status" value="1"/>
</dbReference>
<evidence type="ECO:0000255" key="1">
    <source>
        <dbReference type="HAMAP-Rule" id="MF_01018"/>
    </source>
</evidence>
<protein>
    <recommendedName>
        <fullName evidence="1">ATP phosphoribosyltransferase</fullName>
        <shortName evidence="1">ATP-PRT</shortName>
        <shortName evidence="1">ATP-PRTase</shortName>
        <ecNumber evidence="1">2.4.2.17</ecNumber>
    </recommendedName>
</protein>
<accession>A7GX39</accession>